<accession>P83650</accession>
<organism evidence="4">
    <name type="scientific">Scyliorhinus canicula</name>
    <name type="common">Small-spotted catshark</name>
    <name type="synonym">Squalus canicula</name>
    <dbReference type="NCBI Taxonomy" id="7830"/>
    <lineage>
        <taxon>Eukaryota</taxon>
        <taxon>Metazoa</taxon>
        <taxon>Chordata</taxon>
        <taxon>Craniata</taxon>
        <taxon>Vertebrata</taxon>
        <taxon>Chondrichthyes</taxon>
        <taxon>Elasmobranchii</taxon>
        <taxon>Galeomorphii</taxon>
        <taxon>Galeoidea</taxon>
        <taxon>Carcharhiniformes</taxon>
        <taxon>Scyliorhinidae</taxon>
        <taxon>Scyliorhinus</taxon>
    </lineage>
</organism>
<comment type="function">
    <text evidence="1">Induces a hyperpolarization-activated chloride current when expressed in Xenopus oocytes.</text>
</comment>
<comment type="subcellular location">
    <subcellularLocation>
        <location evidence="1">Membrane</location>
        <topology evidence="1">Single-pass type I membrane protein</topology>
    </subcellularLocation>
</comment>
<comment type="PTM">
    <text evidence="2">Phosphorylated by protein kinase C.</text>
</comment>
<comment type="similarity">
    <text evidence="4">Belongs to the FXYD family.</text>
</comment>
<sequence length="29" mass="3111">VNEPADXXARFTYDXYGLXVVGLIVAAVL</sequence>
<proteinExistence type="evidence at protein level"/>
<reference evidence="4" key="1">
    <citation type="journal article" date="2003" name="Ann. N. Y. Acad. Sci.">
        <title>Themes in ion pump regulation.</title>
        <authorList>
            <person name="Cornelius F."/>
            <person name="Mahmmoud Y.A."/>
        </authorList>
    </citation>
    <scope>PROTEIN SEQUENCE</scope>
    <scope>PHOSPHORYLATION</scope>
    <source>
        <tissue evidence="2">Rectal gland</tissue>
    </source>
</reference>
<keyword id="KW-0868">Chloride</keyword>
<keyword id="KW-0869">Chloride channel</keyword>
<keyword id="KW-0903">Direct protein sequencing</keyword>
<keyword id="KW-0407">Ion channel</keyword>
<keyword id="KW-0406">Ion transport</keyword>
<keyword id="KW-0472">Membrane</keyword>
<keyword id="KW-0597">Phosphoprotein</keyword>
<keyword id="KW-0812">Transmembrane</keyword>
<keyword id="KW-0813">Transport</keyword>
<dbReference type="GO" id="GO:0034707">
    <property type="term" value="C:chloride channel complex"/>
    <property type="evidence" value="ECO:0007669"/>
    <property type="project" value="UniProtKB-KW"/>
</dbReference>
<dbReference type="GO" id="GO:0005254">
    <property type="term" value="F:chloride channel activity"/>
    <property type="evidence" value="ECO:0007669"/>
    <property type="project" value="UniProtKB-KW"/>
</dbReference>
<dbReference type="Gene3D" id="1.20.5.780">
    <property type="entry name" value="Single helix bin"/>
    <property type="match status" value="1"/>
</dbReference>
<protein>
    <recommendedName>
        <fullName>Phospholemman-like protein</fullName>
    </recommendedName>
    <alternativeName>
        <fullName>FXYD domain-containing ion transport regulator</fullName>
    </alternativeName>
    <alternativeName>
        <fullName>PLMS</fullName>
    </alternativeName>
</protein>
<name>PLMS_SCYCA</name>
<evidence type="ECO:0000250" key="1"/>
<evidence type="ECO:0000269" key="2">
    <source>
    </source>
</evidence>
<evidence type="ECO:0000303" key="3">
    <source>
    </source>
</evidence>
<evidence type="ECO:0000305" key="4"/>
<feature type="chain" id="PRO_0000148182" description="Phospholemman-like protein">
    <location>
        <begin position="1"/>
        <end position="29" status="greater than"/>
    </location>
</feature>
<feature type="non-terminal residue" evidence="3">
    <location>
        <position position="29"/>
    </location>
</feature>